<feature type="chain" id="PRO_1000204095" description="RNA 3'-terminal phosphate cyclase">
    <location>
        <begin position="1"/>
        <end position="337"/>
    </location>
</feature>
<feature type="active site" description="Tele-AMP-histidine intermediate" evidence="1">
    <location>
        <position position="306"/>
    </location>
</feature>
<feature type="binding site" evidence="1">
    <location>
        <position position="101"/>
    </location>
    <ligand>
        <name>ATP</name>
        <dbReference type="ChEBI" id="CHEBI:30616"/>
    </ligand>
</feature>
<feature type="binding site" evidence="1">
    <location>
        <begin position="282"/>
        <end position="285"/>
    </location>
    <ligand>
        <name>ATP</name>
        <dbReference type="ChEBI" id="CHEBI:30616"/>
    </ligand>
</feature>
<dbReference type="EC" id="6.5.1.4" evidence="1"/>
<dbReference type="EMBL" id="CP001400">
    <property type="protein sequence ID" value="ACP37125.1"/>
    <property type="molecule type" value="Genomic_DNA"/>
</dbReference>
<dbReference type="RefSeq" id="WP_012710411.1">
    <property type="nucleotide sequence ID" value="NC_012588.1"/>
</dbReference>
<dbReference type="SMR" id="C3MU91"/>
<dbReference type="GeneID" id="84057785"/>
<dbReference type="KEGG" id="sia:M1425_0235"/>
<dbReference type="HOGENOM" id="CLU_027882_0_0_2"/>
<dbReference type="Proteomes" id="UP000001350">
    <property type="component" value="Chromosome"/>
</dbReference>
<dbReference type="GO" id="GO:0005737">
    <property type="term" value="C:cytoplasm"/>
    <property type="evidence" value="ECO:0007669"/>
    <property type="project" value="UniProtKB-SubCell"/>
</dbReference>
<dbReference type="GO" id="GO:0005524">
    <property type="term" value="F:ATP binding"/>
    <property type="evidence" value="ECO:0007669"/>
    <property type="project" value="UniProtKB-KW"/>
</dbReference>
<dbReference type="GO" id="GO:0003963">
    <property type="term" value="F:RNA-3'-phosphate cyclase activity"/>
    <property type="evidence" value="ECO:0007669"/>
    <property type="project" value="UniProtKB-UniRule"/>
</dbReference>
<dbReference type="GO" id="GO:0006396">
    <property type="term" value="P:RNA processing"/>
    <property type="evidence" value="ECO:0007669"/>
    <property type="project" value="InterPro"/>
</dbReference>
<dbReference type="CDD" id="cd00874">
    <property type="entry name" value="RNA_Cyclase_Class_II"/>
    <property type="match status" value="1"/>
</dbReference>
<dbReference type="FunFam" id="3.30.360.20:FF:000002">
    <property type="entry name" value="RNA terminal phosphate cyclase-like 1"/>
    <property type="match status" value="1"/>
</dbReference>
<dbReference type="Gene3D" id="3.65.10.20">
    <property type="entry name" value="RNA 3'-terminal phosphate cyclase domain"/>
    <property type="match status" value="1"/>
</dbReference>
<dbReference type="Gene3D" id="3.30.360.20">
    <property type="entry name" value="RNA 3'-terminal phosphate cyclase, insert domain"/>
    <property type="match status" value="1"/>
</dbReference>
<dbReference type="HAMAP" id="MF_00200">
    <property type="entry name" value="RTC"/>
    <property type="match status" value="1"/>
</dbReference>
<dbReference type="InterPro" id="IPR013791">
    <property type="entry name" value="RNA3'-term_phos_cycl_insert"/>
</dbReference>
<dbReference type="InterPro" id="IPR023797">
    <property type="entry name" value="RNA3'_phos_cyclase_dom"/>
</dbReference>
<dbReference type="InterPro" id="IPR037136">
    <property type="entry name" value="RNA3'_phos_cyclase_dom_sf"/>
</dbReference>
<dbReference type="InterPro" id="IPR000228">
    <property type="entry name" value="RNA3'_term_phos_cyc"/>
</dbReference>
<dbReference type="InterPro" id="IPR017770">
    <property type="entry name" value="RNA3'_term_phos_cyc_type_1"/>
</dbReference>
<dbReference type="InterPro" id="IPR020719">
    <property type="entry name" value="RNA3'_term_phos_cycl-like_CS"/>
</dbReference>
<dbReference type="InterPro" id="IPR013792">
    <property type="entry name" value="RNA3'P_cycl/enolpyr_Trfase_a/b"/>
</dbReference>
<dbReference type="InterPro" id="IPR036553">
    <property type="entry name" value="RPTC_insert"/>
</dbReference>
<dbReference type="NCBIfam" id="TIGR03399">
    <property type="entry name" value="RNA_3prim_cycl"/>
    <property type="match status" value="1"/>
</dbReference>
<dbReference type="PANTHER" id="PTHR11096">
    <property type="entry name" value="RNA 3' TERMINAL PHOSPHATE CYCLASE"/>
    <property type="match status" value="1"/>
</dbReference>
<dbReference type="PANTHER" id="PTHR11096:SF0">
    <property type="entry name" value="RNA 3'-TERMINAL PHOSPHATE CYCLASE"/>
    <property type="match status" value="1"/>
</dbReference>
<dbReference type="Pfam" id="PF01137">
    <property type="entry name" value="RTC"/>
    <property type="match status" value="1"/>
</dbReference>
<dbReference type="Pfam" id="PF05189">
    <property type="entry name" value="RTC_insert"/>
    <property type="match status" value="1"/>
</dbReference>
<dbReference type="PIRSF" id="PIRSF005378">
    <property type="entry name" value="RNA3'_term_phos_cycl_euk"/>
    <property type="match status" value="1"/>
</dbReference>
<dbReference type="SUPFAM" id="SSF55205">
    <property type="entry name" value="EPT/RTPC-like"/>
    <property type="match status" value="1"/>
</dbReference>
<dbReference type="PROSITE" id="PS01287">
    <property type="entry name" value="RTC"/>
    <property type="match status" value="1"/>
</dbReference>
<evidence type="ECO:0000255" key="1">
    <source>
        <dbReference type="HAMAP-Rule" id="MF_00200"/>
    </source>
</evidence>
<gene>
    <name evidence="1" type="primary">rtcA</name>
    <name type="ordered locus">M1425_0235</name>
</gene>
<proteinExistence type="inferred from homology"/>
<sequence>MIEIDGSFGEGGGQILRTSLTLSVITGKPFRIFNIRANRPNPGLQRQHLWAVKAMKMISNAETKGDEVGSKELIFVPHEIKGNINIDIDVGTAGSVTLIIQTVLPAIINKNVRIRIKGGTDVPKSPTIDYIRLVYLEILRKIGIEAKLNLIKRGHYPEGGGEVIIENVNGNPSAFSLLELGKLTIIKGISHVSSLPAHIAERQMNSARELLSKLGVPIEIQTDVRQGEVSKGSGIALAAIGEKSIIGADSLGERGKRAEIVGEEAARILIDNLNTKASVDIHMSDMLMIFASLYGGEYIGAELTSHAYTNMEIIKKFLDIKIDVSGKRPFRFKAKIF</sequence>
<protein>
    <recommendedName>
        <fullName evidence="1">RNA 3'-terminal phosphate cyclase</fullName>
        <shortName evidence="1">RNA cyclase</shortName>
        <shortName evidence="1">RNA-3'-phosphate cyclase</shortName>
        <ecNumber evidence="1">6.5.1.4</ecNumber>
    </recommendedName>
</protein>
<reference key="1">
    <citation type="journal article" date="2009" name="Proc. Natl. Acad. Sci. U.S.A.">
        <title>Biogeography of the Sulfolobus islandicus pan-genome.</title>
        <authorList>
            <person name="Reno M.L."/>
            <person name="Held N.L."/>
            <person name="Fields C.J."/>
            <person name="Burke P.V."/>
            <person name="Whitaker R.J."/>
        </authorList>
    </citation>
    <scope>NUCLEOTIDE SEQUENCE [LARGE SCALE GENOMIC DNA]</scope>
    <source>
        <strain>M.14.25 / Kamchatka #1</strain>
    </source>
</reference>
<name>RTCA_SACI4</name>
<accession>C3MU91</accession>
<comment type="function">
    <text evidence="1">Catalyzes the conversion of 3'-phosphate to a 2',3'-cyclic phosphodiester at the end of RNA. The mechanism of action of the enzyme occurs in 3 steps: (A) adenylation of the enzyme by ATP; (B) transfer of adenylate to an RNA-N3'P to produce RNA-N3'PP5'A; (C) and attack of the adjacent 2'-hydroxyl on the 3'-phosphorus in the diester linkage to produce the cyclic end product. The biological role of this enzyme is unknown but it is likely to function in some aspects of cellular RNA processing.</text>
</comment>
<comment type="catalytic activity">
    <reaction evidence="1">
        <text>a 3'-end 3'-phospho-ribonucleotide-RNA + ATP = a 3'-end 2',3'-cyclophospho-ribonucleotide-RNA + AMP + diphosphate</text>
        <dbReference type="Rhea" id="RHEA:23976"/>
        <dbReference type="Rhea" id="RHEA-COMP:10463"/>
        <dbReference type="Rhea" id="RHEA-COMP:10464"/>
        <dbReference type="ChEBI" id="CHEBI:30616"/>
        <dbReference type="ChEBI" id="CHEBI:33019"/>
        <dbReference type="ChEBI" id="CHEBI:83062"/>
        <dbReference type="ChEBI" id="CHEBI:83064"/>
        <dbReference type="ChEBI" id="CHEBI:456215"/>
        <dbReference type="EC" id="6.5.1.4"/>
    </reaction>
</comment>
<comment type="subcellular location">
    <subcellularLocation>
        <location evidence="1">Cytoplasm</location>
    </subcellularLocation>
</comment>
<comment type="similarity">
    <text evidence="1">Belongs to the RNA 3'-terminal cyclase family. Type 1 subfamily.</text>
</comment>
<organism>
    <name type="scientific">Saccharolobus islandicus (strain M.14.25 / Kamchatka #1)</name>
    <name type="common">Sulfolobus islandicus</name>
    <dbReference type="NCBI Taxonomy" id="427317"/>
    <lineage>
        <taxon>Archaea</taxon>
        <taxon>Thermoproteota</taxon>
        <taxon>Thermoprotei</taxon>
        <taxon>Sulfolobales</taxon>
        <taxon>Sulfolobaceae</taxon>
        <taxon>Saccharolobus</taxon>
    </lineage>
</organism>
<keyword id="KW-0067">ATP-binding</keyword>
<keyword id="KW-0963">Cytoplasm</keyword>
<keyword id="KW-0436">Ligase</keyword>
<keyword id="KW-0547">Nucleotide-binding</keyword>